<name>THIG_MYCLB</name>
<accession>B8ZU92</accession>
<feature type="chain" id="PRO_1000196876" description="Thiazole synthase">
    <location>
        <begin position="1"/>
        <end position="261"/>
    </location>
</feature>
<feature type="active site" description="Schiff-base intermediate with DXP" evidence="1">
    <location>
        <position position="98"/>
    </location>
</feature>
<feature type="binding site" evidence="1">
    <location>
        <position position="159"/>
    </location>
    <ligand>
        <name>1-deoxy-D-xylulose 5-phosphate</name>
        <dbReference type="ChEBI" id="CHEBI:57792"/>
    </ligand>
</feature>
<feature type="binding site" evidence="1">
    <location>
        <begin position="185"/>
        <end position="186"/>
    </location>
    <ligand>
        <name>1-deoxy-D-xylulose 5-phosphate</name>
        <dbReference type="ChEBI" id="CHEBI:57792"/>
    </ligand>
</feature>
<feature type="binding site" evidence="1">
    <location>
        <begin position="207"/>
        <end position="208"/>
    </location>
    <ligand>
        <name>1-deoxy-D-xylulose 5-phosphate</name>
        <dbReference type="ChEBI" id="CHEBI:57792"/>
    </ligand>
</feature>
<comment type="function">
    <text evidence="1">Catalyzes the rearrangement of 1-deoxy-D-xylulose 5-phosphate (DXP) to produce the thiazole phosphate moiety of thiamine. Sulfur is provided by the thiocarboxylate moiety of the carrier protein ThiS. In vitro, sulfur can be provided by H(2)S.</text>
</comment>
<comment type="catalytic activity">
    <reaction evidence="1">
        <text>[ThiS sulfur-carrier protein]-C-terminal-Gly-aminoethanethioate + 2-iminoacetate + 1-deoxy-D-xylulose 5-phosphate = [ThiS sulfur-carrier protein]-C-terminal Gly-Gly + 2-[(2R,5Z)-2-carboxy-4-methylthiazol-5(2H)-ylidene]ethyl phosphate + 2 H2O + H(+)</text>
        <dbReference type="Rhea" id="RHEA:26297"/>
        <dbReference type="Rhea" id="RHEA-COMP:12909"/>
        <dbReference type="Rhea" id="RHEA-COMP:19908"/>
        <dbReference type="ChEBI" id="CHEBI:15377"/>
        <dbReference type="ChEBI" id="CHEBI:15378"/>
        <dbReference type="ChEBI" id="CHEBI:57792"/>
        <dbReference type="ChEBI" id="CHEBI:62899"/>
        <dbReference type="ChEBI" id="CHEBI:77846"/>
        <dbReference type="ChEBI" id="CHEBI:90778"/>
        <dbReference type="ChEBI" id="CHEBI:232372"/>
        <dbReference type="EC" id="2.8.1.10"/>
    </reaction>
</comment>
<comment type="pathway">
    <text evidence="1">Cofactor biosynthesis; thiamine diphosphate biosynthesis.</text>
</comment>
<comment type="subunit">
    <text evidence="1">Homotetramer. Forms heterodimers with either ThiH or ThiS.</text>
</comment>
<comment type="subcellular location">
    <subcellularLocation>
        <location evidence="1">Cytoplasm</location>
    </subcellularLocation>
</comment>
<comment type="similarity">
    <text evidence="1">Belongs to the ThiG family.</text>
</comment>
<sequence length="261" mass="27138">MVESKFTIGDRTFTSRLIMGTGGAANLAILEEALIASGTELTTVAIRRVDTDGGSGLLKLLSRLDIMPLPNTAGCRSAAEAVLTAQLAREALNTNWIKLEVIADERTLLPDGLELVRAAEQLVDAGFVVLPYTNDDPALAHRLEGTGCAAVMPLGSPIGTGLGINNPHNIEIIVAQARVPVVLDAGIGTTSDAALAMELGCDAVLLASAVTRAVDPPTMAAAMASAVTAGYLARRAGRIPKRFWAQASSPELMRTGEELGN</sequence>
<keyword id="KW-0963">Cytoplasm</keyword>
<keyword id="KW-0704">Schiff base</keyword>
<keyword id="KW-0784">Thiamine biosynthesis</keyword>
<keyword id="KW-0808">Transferase</keyword>
<gene>
    <name evidence="1" type="primary">thiG</name>
    <name type="ordered locus">MLBr00297</name>
</gene>
<protein>
    <recommendedName>
        <fullName evidence="1">Thiazole synthase</fullName>
        <ecNumber evidence="1">2.8.1.10</ecNumber>
    </recommendedName>
</protein>
<dbReference type="EC" id="2.8.1.10" evidence="1"/>
<dbReference type="EMBL" id="FM211192">
    <property type="protein sequence ID" value="CAR70390.1"/>
    <property type="molecule type" value="Genomic_DNA"/>
</dbReference>
<dbReference type="SMR" id="B8ZU92"/>
<dbReference type="KEGG" id="mlb:MLBr00297"/>
<dbReference type="HOGENOM" id="CLU_062233_1_0_11"/>
<dbReference type="UniPathway" id="UPA00060"/>
<dbReference type="Proteomes" id="UP000006900">
    <property type="component" value="Chromosome"/>
</dbReference>
<dbReference type="GO" id="GO:0005737">
    <property type="term" value="C:cytoplasm"/>
    <property type="evidence" value="ECO:0007669"/>
    <property type="project" value="UniProtKB-SubCell"/>
</dbReference>
<dbReference type="GO" id="GO:1990107">
    <property type="term" value="F:thiazole synthase activity"/>
    <property type="evidence" value="ECO:0007669"/>
    <property type="project" value="UniProtKB-EC"/>
</dbReference>
<dbReference type="GO" id="GO:0009229">
    <property type="term" value="P:thiamine diphosphate biosynthetic process"/>
    <property type="evidence" value="ECO:0007669"/>
    <property type="project" value="UniProtKB-UniRule"/>
</dbReference>
<dbReference type="CDD" id="cd04728">
    <property type="entry name" value="ThiG"/>
    <property type="match status" value="1"/>
</dbReference>
<dbReference type="Gene3D" id="3.20.20.70">
    <property type="entry name" value="Aldolase class I"/>
    <property type="match status" value="1"/>
</dbReference>
<dbReference type="HAMAP" id="MF_00443">
    <property type="entry name" value="ThiG"/>
    <property type="match status" value="1"/>
</dbReference>
<dbReference type="InterPro" id="IPR013785">
    <property type="entry name" value="Aldolase_TIM"/>
</dbReference>
<dbReference type="InterPro" id="IPR033983">
    <property type="entry name" value="Thiazole_synthase_ThiG"/>
</dbReference>
<dbReference type="InterPro" id="IPR008867">
    <property type="entry name" value="ThiG"/>
</dbReference>
<dbReference type="PANTHER" id="PTHR34266">
    <property type="entry name" value="THIAZOLE SYNTHASE"/>
    <property type="match status" value="1"/>
</dbReference>
<dbReference type="PANTHER" id="PTHR34266:SF2">
    <property type="entry name" value="THIAZOLE SYNTHASE"/>
    <property type="match status" value="1"/>
</dbReference>
<dbReference type="Pfam" id="PF05690">
    <property type="entry name" value="ThiG"/>
    <property type="match status" value="1"/>
</dbReference>
<dbReference type="SUPFAM" id="SSF110399">
    <property type="entry name" value="ThiG-like"/>
    <property type="match status" value="1"/>
</dbReference>
<organism>
    <name type="scientific">Mycobacterium leprae (strain Br4923)</name>
    <dbReference type="NCBI Taxonomy" id="561304"/>
    <lineage>
        <taxon>Bacteria</taxon>
        <taxon>Bacillati</taxon>
        <taxon>Actinomycetota</taxon>
        <taxon>Actinomycetes</taxon>
        <taxon>Mycobacteriales</taxon>
        <taxon>Mycobacteriaceae</taxon>
        <taxon>Mycobacterium</taxon>
    </lineage>
</organism>
<reference key="1">
    <citation type="journal article" date="2009" name="Nat. Genet.">
        <title>Comparative genomic and phylogeographic analysis of Mycobacterium leprae.</title>
        <authorList>
            <person name="Monot M."/>
            <person name="Honore N."/>
            <person name="Garnier T."/>
            <person name="Zidane N."/>
            <person name="Sherafi D."/>
            <person name="Paniz-Mondolfi A."/>
            <person name="Matsuoka M."/>
            <person name="Taylor G.M."/>
            <person name="Donoghue H.D."/>
            <person name="Bouwman A."/>
            <person name="Mays S."/>
            <person name="Watson C."/>
            <person name="Lockwood D."/>
            <person name="Khamispour A."/>
            <person name="Dowlati Y."/>
            <person name="Jianping S."/>
            <person name="Rea T.H."/>
            <person name="Vera-Cabrera L."/>
            <person name="Stefani M.M."/>
            <person name="Banu S."/>
            <person name="Macdonald M."/>
            <person name="Sapkota B.R."/>
            <person name="Spencer J.S."/>
            <person name="Thomas J."/>
            <person name="Harshman K."/>
            <person name="Singh P."/>
            <person name="Busso P."/>
            <person name="Gattiker A."/>
            <person name="Rougemont J."/>
            <person name="Brennan P.J."/>
            <person name="Cole S.T."/>
        </authorList>
    </citation>
    <scope>NUCLEOTIDE SEQUENCE [LARGE SCALE GENOMIC DNA]</scope>
    <source>
        <strain>Br4923</strain>
    </source>
</reference>
<evidence type="ECO:0000255" key="1">
    <source>
        <dbReference type="HAMAP-Rule" id="MF_00443"/>
    </source>
</evidence>
<proteinExistence type="inferred from homology"/>